<reference key="1">
    <citation type="journal article" date="2000" name="FEMS Microbiol. Lett.">
        <title>The Giardia genome project database.</title>
        <authorList>
            <person name="McArthur A.G."/>
            <person name="Morrison H.G."/>
            <person name="Nixon J.E."/>
            <person name="Passamaneck N.Q."/>
            <person name="Kim U."/>
            <person name="Hinkle G."/>
            <person name="Crocker M.K."/>
            <person name="Holder M.E."/>
            <person name="Farr R."/>
            <person name="Reich C.I."/>
            <person name="Olsen G.E."/>
            <person name="Aley S.B."/>
            <person name="Adam R.D."/>
            <person name="Gillin F.D."/>
            <person name="Sogin M.L."/>
        </authorList>
    </citation>
    <scope>NUCLEOTIDE SEQUENCE [GENOMIC DNA]</scope>
</reference>
<reference key="2">
    <citation type="journal article" date="2002" name="BMC Genomics">
        <title>Expression and genomic analysis of midasin, a novel and highly conserved AAA protein distantly related to dynein.</title>
        <authorList>
            <person name="Garbarino J.E."/>
            <person name="Gibbons I.R."/>
        </authorList>
    </citation>
    <scope>IDENTIFICATION</scope>
    <scope>GENE NAME</scope>
    <scope>SIMILARITY TO OTHER FAMILY MEMBERS</scope>
</reference>
<gene>
    <name type="primary">MDN1</name>
</gene>
<comment type="function">
    <text evidence="1">Nuclear chaperone required for maturation and nuclear export of pre-60S ribosome subunits. Functions at successive maturation steps to remove ribosomal factors at critical transition points, first driving the exit of early pre-60S particles from the nucleolus and then driving late pre-60S particles from the nucleus.</text>
</comment>
<comment type="subunit">
    <text evidence="1">Associates with pre-60S ribosomes in the nucleoplasm.</text>
</comment>
<comment type="subcellular location">
    <subcellularLocation>
        <location evidence="1">Nucleus</location>
        <location evidence="1">Nucleolus</location>
    </subcellularLocation>
    <subcellularLocation>
        <location evidence="1">Nucleus</location>
        <location evidence="1">Nucleoplasm</location>
    </subcellularLocation>
</comment>
<comment type="similarity">
    <text evidence="6">Belongs to the midasin family.</text>
</comment>
<accession>Q8T5T1</accession>
<proteinExistence type="inferred from homology"/>
<evidence type="ECO:0000250" key="1">
    <source>
        <dbReference type="UniProtKB" id="Q12019"/>
    </source>
</evidence>
<evidence type="ECO:0000255" key="2"/>
<evidence type="ECO:0000255" key="3">
    <source>
        <dbReference type="PROSITE-ProRule" id="PRU00136"/>
    </source>
</evidence>
<evidence type="ECO:0000255" key="4">
    <source>
        <dbReference type="PROSITE-ProRule" id="PRU00219"/>
    </source>
</evidence>
<evidence type="ECO:0000256" key="5">
    <source>
        <dbReference type="SAM" id="MobiDB-lite"/>
    </source>
</evidence>
<evidence type="ECO:0000305" key="6"/>
<keyword id="KW-0067">ATP-binding</keyword>
<keyword id="KW-0143">Chaperone</keyword>
<keyword id="KW-0547">Nucleotide-binding</keyword>
<keyword id="KW-0539">Nucleus</keyword>
<keyword id="KW-0677">Repeat</keyword>
<organism>
    <name type="scientific">Giardia intestinalis</name>
    <name type="common">Giardia lamblia</name>
    <dbReference type="NCBI Taxonomy" id="5741"/>
    <lineage>
        <taxon>Eukaryota</taxon>
        <taxon>Metamonada</taxon>
        <taxon>Diplomonadida</taxon>
        <taxon>Hexamitidae</taxon>
        <taxon>Giardiinae</taxon>
        <taxon>Giardia</taxon>
    </lineage>
</organism>
<protein>
    <recommendedName>
        <fullName>Midasin</fullName>
    </recommendedName>
    <alternativeName>
        <fullName>Dynein-related AAA-ATPase MDN1</fullName>
    </alternativeName>
    <alternativeName>
        <fullName>MIDAS-containing protein</fullName>
    </alternativeName>
</protein>
<feature type="chain" id="PRO_0000096335" description="Midasin">
    <location>
        <begin position="1"/>
        <end position="4835"/>
    </location>
</feature>
<feature type="domain" description="VWFA" evidence="4">
    <location>
        <begin position="4629"/>
        <end position="4818"/>
    </location>
</feature>
<feature type="region of interest" description="AAA-ATPase protomer 1" evidence="2">
    <location>
        <begin position="12"/>
        <end position="161"/>
    </location>
</feature>
<feature type="region of interest" description="AAA-ATPase protomer 2" evidence="2">
    <location>
        <begin position="324"/>
        <end position="689"/>
    </location>
</feature>
<feature type="region of interest" description="AAA-ATPase protomer 3" evidence="2">
    <location>
        <begin position="797"/>
        <end position="1049"/>
    </location>
</feature>
<feature type="region of interest" description="AAA-ATPase protomer 4" evidence="2">
    <location>
        <begin position="1096"/>
        <end position="1375"/>
    </location>
</feature>
<feature type="region of interest" description="AAA-ATPase protomer 5" evidence="2">
    <location>
        <begin position="1489"/>
        <end position="1738"/>
    </location>
</feature>
<feature type="region of interest" description="AAA-ATPase protomer 6" evidence="2">
    <location>
        <begin position="1821"/>
        <end position="2110"/>
    </location>
</feature>
<feature type="region of interest" description="Linker" evidence="1">
    <location>
        <begin position="2197"/>
        <end position="4058"/>
    </location>
</feature>
<feature type="region of interest" description="Disordered" evidence="5">
    <location>
        <begin position="4033"/>
        <end position="4056"/>
    </location>
</feature>
<feature type="region of interest" description="Disordered" evidence="5">
    <location>
        <begin position="4108"/>
        <end position="4523"/>
    </location>
</feature>
<feature type="compositionally biased region" description="Acidic residues" evidence="5">
    <location>
        <begin position="4109"/>
        <end position="4133"/>
    </location>
</feature>
<feature type="compositionally biased region" description="Acidic residues" evidence="5">
    <location>
        <begin position="4141"/>
        <end position="4150"/>
    </location>
</feature>
<feature type="compositionally biased region" description="Acidic residues" evidence="5">
    <location>
        <begin position="4226"/>
        <end position="4241"/>
    </location>
</feature>
<feature type="compositionally biased region" description="Acidic residues" evidence="5">
    <location>
        <begin position="4282"/>
        <end position="4291"/>
    </location>
</feature>
<feature type="compositionally biased region" description="Acidic residues" evidence="5">
    <location>
        <begin position="4315"/>
        <end position="4330"/>
    </location>
</feature>
<feature type="compositionally biased region" description="Polar residues" evidence="5">
    <location>
        <begin position="4331"/>
        <end position="4346"/>
    </location>
</feature>
<feature type="compositionally biased region" description="Basic and acidic residues" evidence="5">
    <location>
        <begin position="4347"/>
        <end position="4360"/>
    </location>
</feature>
<feature type="compositionally biased region" description="Basic and acidic residues" evidence="5">
    <location>
        <begin position="4394"/>
        <end position="4415"/>
    </location>
</feature>
<feature type="compositionally biased region" description="Basic and acidic residues" evidence="5">
    <location>
        <begin position="4429"/>
        <end position="4438"/>
    </location>
</feature>
<feature type="compositionally biased region" description="Polar residues" evidence="5">
    <location>
        <begin position="4468"/>
        <end position="4477"/>
    </location>
</feature>
<feature type="compositionally biased region" description="Basic and acidic residues" evidence="5">
    <location>
        <begin position="4478"/>
        <end position="4488"/>
    </location>
</feature>
<feature type="binding site" evidence="3">
    <location>
        <begin position="31"/>
        <end position="38"/>
    </location>
    <ligand>
        <name>ATP</name>
        <dbReference type="ChEBI" id="CHEBI:30616"/>
    </ligand>
</feature>
<feature type="binding site" evidence="2">
    <location>
        <begin position="356"/>
        <end position="363"/>
    </location>
    <ligand>
        <name>ATP</name>
        <dbReference type="ChEBI" id="CHEBI:30616"/>
    </ligand>
</feature>
<feature type="binding site" evidence="2">
    <location>
        <begin position="814"/>
        <end position="821"/>
    </location>
    <ligand>
        <name>ATP</name>
        <dbReference type="ChEBI" id="CHEBI:30616"/>
    </ligand>
</feature>
<feature type="binding site" evidence="2">
    <location>
        <begin position="1127"/>
        <end position="1134"/>
    </location>
    <ligand>
        <name>ATP</name>
        <dbReference type="ChEBI" id="CHEBI:30616"/>
    </ligand>
</feature>
<feature type="binding site" evidence="2">
    <location>
        <begin position="1513"/>
        <end position="1520"/>
    </location>
    <ligand>
        <name>ATP</name>
        <dbReference type="ChEBI" id="CHEBI:30616"/>
    </ligand>
</feature>
<feature type="binding site" evidence="2">
    <location>
        <begin position="1839"/>
        <end position="1846"/>
    </location>
    <ligand>
        <name>ATP</name>
        <dbReference type="ChEBI" id="CHEBI:30616"/>
    </ligand>
</feature>
<dbReference type="EMBL" id="AF494287">
    <property type="protein sequence ID" value="AAM12656.1"/>
    <property type="molecule type" value="Genomic_DNA"/>
</dbReference>
<dbReference type="SMR" id="Q8T5T1"/>
<dbReference type="VEuPathDB" id="GiardiaDB:DHA2_153310"/>
<dbReference type="VEuPathDB" id="GiardiaDB:GL50581_3431"/>
<dbReference type="VEuPathDB" id="GiardiaDB:GL50803_0039312"/>
<dbReference type="VEuPathDB" id="GiardiaDB:QR46_4119"/>
<dbReference type="eggNOG" id="KOG1808">
    <property type="taxonomic scope" value="Eukaryota"/>
</dbReference>
<dbReference type="GO" id="GO:0005730">
    <property type="term" value="C:nucleolus"/>
    <property type="evidence" value="ECO:0007669"/>
    <property type="project" value="UniProtKB-SubCell"/>
</dbReference>
<dbReference type="GO" id="GO:0005654">
    <property type="term" value="C:nucleoplasm"/>
    <property type="evidence" value="ECO:0007669"/>
    <property type="project" value="UniProtKB-SubCell"/>
</dbReference>
<dbReference type="GO" id="GO:0030687">
    <property type="term" value="C:preribosome, large subunit precursor"/>
    <property type="evidence" value="ECO:0007669"/>
    <property type="project" value="TreeGrafter"/>
</dbReference>
<dbReference type="GO" id="GO:0005524">
    <property type="term" value="F:ATP binding"/>
    <property type="evidence" value="ECO:0007669"/>
    <property type="project" value="UniProtKB-KW"/>
</dbReference>
<dbReference type="GO" id="GO:0016887">
    <property type="term" value="F:ATP hydrolysis activity"/>
    <property type="evidence" value="ECO:0007669"/>
    <property type="project" value="InterPro"/>
</dbReference>
<dbReference type="GO" id="GO:0000027">
    <property type="term" value="P:ribosomal large subunit assembly"/>
    <property type="evidence" value="ECO:0007669"/>
    <property type="project" value="InterPro"/>
</dbReference>
<dbReference type="GO" id="GO:0000055">
    <property type="term" value="P:ribosomal large subunit export from nucleus"/>
    <property type="evidence" value="ECO:0007669"/>
    <property type="project" value="TreeGrafter"/>
</dbReference>
<dbReference type="CDD" id="cd00009">
    <property type="entry name" value="AAA"/>
    <property type="match status" value="1"/>
</dbReference>
<dbReference type="FunFam" id="3.40.50.300:FF:000142">
    <property type="entry name" value="Midasin"/>
    <property type="match status" value="1"/>
</dbReference>
<dbReference type="FunFam" id="3.40.50.300:FF:001384">
    <property type="entry name" value="Midasin"/>
    <property type="match status" value="1"/>
</dbReference>
<dbReference type="FunFam" id="3.40.50.300:FF:001887">
    <property type="entry name" value="Midasin"/>
    <property type="match status" value="1"/>
</dbReference>
<dbReference type="FunFam" id="3.40.50.300:FF:003794">
    <property type="entry name" value="Midasin"/>
    <property type="match status" value="1"/>
</dbReference>
<dbReference type="Gene3D" id="3.40.50.300">
    <property type="entry name" value="P-loop containing nucleotide triphosphate hydrolases"/>
    <property type="match status" value="6"/>
</dbReference>
<dbReference type="Gene3D" id="3.40.50.410">
    <property type="entry name" value="von Willebrand factor, type A domain"/>
    <property type="match status" value="1"/>
</dbReference>
<dbReference type="InterPro" id="IPR003593">
    <property type="entry name" value="AAA+_ATPase"/>
</dbReference>
<dbReference type="InterPro" id="IPR040848">
    <property type="entry name" value="AAA_lid_7"/>
</dbReference>
<dbReference type="InterPro" id="IPR011704">
    <property type="entry name" value="ATPase_dyneun-rel_AAA"/>
</dbReference>
<dbReference type="InterPro" id="IPR012099">
    <property type="entry name" value="Midasin"/>
</dbReference>
<dbReference type="InterPro" id="IPR041190">
    <property type="entry name" value="Midasin_AAA_lid_5"/>
</dbReference>
<dbReference type="InterPro" id="IPR027417">
    <property type="entry name" value="P-loop_NTPase"/>
</dbReference>
<dbReference type="InterPro" id="IPR002035">
    <property type="entry name" value="VWF_A"/>
</dbReference>
<dbReference type="InterPro" id="IPR036465">
    <property type="entry name" value="vWFA_dom_sf"/>
</dbReference>
<dbReference type="PANTHER" id="PTHR48103:SF2">
    <property type="entry name" value="MIDASIN"/>
    <property type="match status" value="1"/>
</dbReference>
<dbReference type="PANTHER" id="PTHR48103">
    <property type="entry name" value="MIDASIN-RELATED"/>
    <property type="match status" value="1"/>
</dbReference>
<dbReference type="Pfam" id="PF07728">
    <property type="entry name" value="AAA_5"/>
    <property type="match status" value="5"/>
</dbReference>
<dbReference type="Pfam" id="PF12775">
    <property type="entry name" value="AAA_7"/>
    <property type="match status" value="1"/>
</dbReference>
<dbReference type="Pfam" id="PF17865">
    <property type="entry name" value="AAA_lid_5"/>
    <property type="match status" value="1"/>
</dbReference>
<dbReference type="Pfam" id="PF17867">
    <property type="entry name" value="AAA_lid_7"/>
    <property type="match status" value="2"/>
</dbReference>
<dbReference type="PIRSF" id="PIRSF010340">
    <property type="entry name" value="Midasin"/>
    <property type="match status" value="1"/>
</dbReference>
<dbReference type="SMART" id="SM00382">
    <property type="entry name" value="AAA"/>
    <property type="match status" value="5"/>
</dbReference>
<dbReference type="SUPFAM" id="SSF52540">
    <property type="entry name" value="P-loop containing nucleoside triphosphate hydrolases"/>
    <property type="match status" value="6"/>
</dbReference>
<dbReference type="SUPFAM" id="SSF53300">
    <property type="entry name" value="vWA-like"/>
    <property type="match status" value="1"/>
</dbReference>
<dbReference type="PROSITE" id="PS50234">
    <property type="entry name" value="VWFA"/>
    <property type="match status" value="1"/>
</dbReference>
<sequence length="4835" mass="539740">MSGYFTDLQNAEVLRAAESIVSSGQAVLLCGPSASGRTALLSHLASKLGAKPPIPLHLTTAQDTRDLIGSYVMTNKPGDFRFILGPLAYAAQSGRWISIEEITTISQDSLLLLSSVVNTRTLSVGSYQISVHPDFRIHAKTSADPALLSTIVKSMFYPLVLPPLGNHLFQVLTKHCNRGICTILAHIHVQFETHRLTAGRISASDMVKWARRIDLDLKNGGAVLNKAVQEASAGTAATTLVSWLDDNTRMVMIKNAWEAFVLRYSKEQTRRAFLDILRLSLNIHEELMLSTLLKIKVDIRHDYTQKRLVCGRVSLPFYESPDERSLDDICRTNHTTRLLEIISSAIRNNEPLLLVGPTGIGKTTCLQVIARALGKKLHVVNMSSQTDAADLLGGYVPATLDRILRNLYDAITGSLGLYISVRKNQIFVTELHKSYAEKDIAKFLANCETALSGMRQVLRKEVGEVVEQGSTEQRVSHDKKYARRGTYENSLYFLQSLGDTLEQATELHKILCHEVETKKPTMAFKYQEGLLVQALVKGDWILIDEINLASYDLLDVISQLVNPEHNEIAIPDKGFVAKNPHFRVFAAMNPGSDVGKKDLPPTIRRCFTEINVSEMSDDVDIVALTKSYLRMDDAMIEDRQGLDPNVVYQLFTVLKARAKTDLVTAAEAKSPCFSLRSLCRALSFAHRFRAAAGLRRSMYEGFMLAFGSMLNEKSRQAVHALILDKLLNGNKEYLLNPFIIQPFNKPCTAMIFQATTKDEAVTVEYQEPQAAHGFLEEEKSRARSTDYVLTKSTRSYMTTISRAIAAQLPILLEGTTSSGKTSLIKHIAKQFGCPITRINNHEHTDLSEYFGSYQPDPLTGQLVFKDGPLVTGMKQGHWVILDELNMASSEILEALNRLLDDNRELLVPDTQEIVRPAPGFLLFATQNPSGSYAGRKMLSEAFQNRFIMIEFADISTEELKEILINRSTSRHLAPQYCEKLITTIQAIKMQLSHRNNNAVMTNALITLRDLFRVADRLPRTLTELAMGIFELIGERQRDPADKQLVAEIIAKNLGLKTFSVSAAEQEYAIRVRPIQSMIEKALKAGADSPKSAFLLKFQDIVWTPSMIRLFALLFTSVSNGESPLLVGVSGAGKTTSVELIAAIMAQQLVQVNLHKHTESADFIGSLRPLRSRESMHAHLSVLKEYAATTTNVDKAVYAEIKRLETTLGTKLFEWEDGPILNCMKRGHILLLDEVSLADESVLERLNSVLETSRELTVAENPNMPRPVIAHTGFKLIATMNPAGDYGKKELSPAMRSRLTEFWMPHIRDINEVRMILTRKLQKTAIYRLGHQQGLDVVSLLADFFAEMDRITQSGRLGDVFTLSIRDILAVCDYITEVQTKEGTELGQMLIDAVTLSILDGLPVRTQLGNMPACREVKHEMVLYLANRILSANLTDIDLIQDLTVSISKDTNELTFLQASTQTVLATIPPGPQYNHAKALRKMTSFRLDAPTTIKNACRIAKALRFQRPILLEGDPGVGKSALVSAIAEICGYSLVRINLSEQTDLSDLLGSDLPAENGFRWVDGVLLKAVKEGAFILLDELNLANQTVLEGLNSLLDHRRSLFIPELMLSVKSPDTLRIFGTQNPRSQGSGRKGLPQSFINRFLNVYVDVLKSQDYDWILSNLFTDIPTYVLDYILGSTKQLRAGLEELKFGISGGPWELNVRDMMRLCDMLTTTPGLAQGITLAHAKHYAHILFGYRFRTADDDAYVQNVLFSPHSLDSVAEATQSHHWYSLRPLWNVTEDVVKIGSLAIPRIDPVFRDVLGTKLSYAHTSCFLTAQLVALEALAVAVTQNLSCILVGSPESGKSSILRTLADVVRQPLVHISASTATDVSDLIGAYEQVDVLYDLKSVIRDLCLFVHSLPIKASYSAISFSEFLKDLTASLDREIGDGLGSKSRAISMESIVSEVVQKLLLEFMAKFSPDLDSGGLAAKNFSLFCSEILTQDTTPVDERFSPHMPTIPELCKSMASLYLSTQQSQTGRFVWRDSELIRALERGYWVELTNANFCMPSVLDRLNSLLERGGGLEILEQGLEETRSIKVHPNFRLFISYAPTSDISRALRNRSLELSIDIQVSHYNLLDIVRCVYTSSTASGVSLDPYLIKLVSLVYFELSRDNPEIVGLGLLFKWLKLLVTYHKRFSTSVGDPKAVSSWVDRSFSSVFIASTLNADLHRQYMQVYQNARLALQGDGSLEACTLVEAAAVLNQLTLGAVRKLSISNSLQHSLALLELRTTVKPLDQLVSLADQEPQIMEPFSQVSGWLAICVGHSLDFQHHKELVSNLLTSTDINPMYLLTPPEPSSQALLKYISQGYLDMYSSPDSIIHQVIKYVSLCSPFYASILKLFIEGKFTTKDSYLLLYLIELSQHLATDPNNYDYVALFFSLFELLISHSIDPSTKTYSLGQRQVMRTFFDMILTDQYFESMPRLLSGYIRSLFISAARNDLETAWLAVRKNLALARISVHYLPELFKVFRYVIERLNLCISPEGVVFLQEGLSDSITASLWKDILATVIYMACRADDQTGDYVPKLAILQDSANRIDLCASKLSGNQHPTARALAQMQSLFLLFTGKAFCMQVSDTLEGWSQRDLTTQLPILLFRSMSFYHRNAAGPITYLRGPIFVSTGEFVTSSLSVPALLTNAIEEQATSVLKSLLCRSEDFLSYVGNVINSITTIVLRLFFAALEREAPSCDFTDGSFQLFALILETIVHSSNPLLASLTQGVEDILKAIISVQLSPSPLLLSGLVLTVASLVLYLLTSIANQRDPIVMTKHREVLYRRLAKLIATSIEDSKLHALFVFGDGALSESSSIYKELSTLYNSYAEAADQYAAELLVRADDEDNTFFEDLSSQLASLDGFEVHVLTFVSGVLNLEKVLQMHESTECIEAILDGLAVAERQISTTLAALLPRLINYTVESSYYLDMTIPIASFLMCLRVGLSAVISSVYAHVCDAINAARRLSSEGIGLQITLQDLLLLIQRVVVGTGDEFLDLLCYDKFIRSCCSSKTVSTLHVARLFTLSLLQYSSCSKGVQGDVSQFLLADTLRPERVSSIAAQFEIEEARSYRKYIADHSIFKTRNQSSTAEGVSEEDELKTQIAALFPKNDSHFIKSDTSSDDEQPISMSAQTKVDYDDAYATSFFTRMNMILIIGNCILHLYTSDTEALPIQERLQNLSSILQAHVPHLSRPLVALQAVTYALSICAGGVSSNLSIRSPLTPETDRLMYPLVTGATMGLVRVLSSRSPNVDYAKLQTGKTRRAIHCEDIYSRPYPYETAEFCSTLLRKIIVRTQHLLTEWPDNVQLLDIMHVCDKLMELPVLEAPLVMFLTGAEVLVRHLETWDKGAPAVYKYVTNPNVPVPESLTKSLIHLMVTWRRVELMSWNGFFSRVHTQFSNVSLTYWPELLIASLTYQRSVTQGEPSTEAYYAQMREFLYESNVGEFPVRLKLLYTLSALLSNIEELAEPELVSSPHKTMTSAVLFSIASEAVEFAKYMNKEFEEEAAQIKKRFEDQIRIFEWNERSSYTSWLTAQNSHRLCTKIIREYTEVLQHATRAFHMGYSATYDRIPLSVTVQEYLPLSSESGMLPPALSQELVERLNYCVEQMCHGRKESETLKRNEKNRLLSDVLDVLKETLGCVLSSGFAFKQSFGWKLAHLCLPSVHSTFELMHMFHDSLCQRCNEVEPHDIERMKRIIACLNQVFVQLSELVVELADIELLSRVMRTAPTGSSKSQADSVLYVYLADNSVPQLLTTQVMSHVTKAHKMCMSLQEFLIGLPLDSCKSSPTKLHEQIGGFLERFSADSVTALNRIKIFSKFSALIKRLCSITLIPLAFFEEAKAILQQILADLSPIFSALIAVLPTAPISTFVTEHAKYLAQVTEVIDTLTETAAQCRVEEAATVSSIEWPYFALPFASVGEEGLSVEIIVDNAKKQVSAYMTAFFTSTLQPILQCATRHVVSLPVLPQKLLCQIETLKGDMQALADVLAKFIGPLISGAIALLRTGFHCHVDDDQKETDNDNQSGLGLGDGTGDQNVSKEAAKELCEDDLMGNQNDRDQQEQQEKDGDDEAIEMQNDFGGMSESLHHDIEEEDSNGSDEEEVLEKEMGDEQGEAIDERNYNEDDDSAEEYSDEQKKNTNNNNDTMELAAQEKDQDSINSELSDPSGEQHEEQADATGSTDEQAQEDDYNDLDDKNLSGQSDLSVPEADGEDETVNEELEEEQQQMSDLSNPDQDACAIEEDDDRDLPSSDENAEEHDEHEAPVDIDDNEASDEQSTYNDNDRDDAINISAQQQATNDEEEMQKDTEYDQENITDSNPDANEVGTNDQKQTHEDNDQFRQENIEDQWEAESTENSQGEGAESADLKEGNPDMSLEEFQRIWKERLNIHDRESEKDEAAEPQDMPLQSNKTVEFDDSKSGRDGALGLTESKHRNLTNQEFDNPNEERNVEHNSSCETSQSSHDRPPAEHLNPEISDEGEESSTASDKQEQAVLSHMRESSKDLLNPEGEVYQELAVSLASEETKRAPEDVAAASARGNHLLLDLIKQTSAAAFSLAERLRIILEPTVTSDLKGDFRTGKKLNLRRIIPFIASEFQKDKIWLRRTKPSKRVYQVLLAVDDSSSMAPIAKYALQAITLLFNACKFLEVGQLSVFSFGQKFELLLPITDQYNDASLAYAIGSFTFAQNETRVSDAISIASDYLDSVRFFKGSDSALQLLLMISDGRLKEKGGVAREIRKCMGRGQLPVLIVLDTDKKSIMDIKSVSFITDSSGKRVRQTSMYLDDFPFQCYALLRHIEDLPETLVAVIKRWIESVSVYNAV</sequence>
<name>MDN1_GIAIN</name>